<gene>
    <name evidence="1" type="primary">ydiU</name>
    <name evidence="1" type="synonym">selO</name>
    <name type="ordered locus">BCAH820_3523</name>
</gene>
<evidence type="ECO:0000255" key="1">
    <source>
        <dbReference type="HAMAP-Rule" id="MF_00692"/>
    </source>
</evidence>
<evidence type="ECO:0000256" key="2">
    <source>
        <dbReference type="SAM" id="MobiDB-lite"/>
    </source>
</evidence>
<reference key="1">
    <citation type="submission" date="2008-10" db="EMBL/GenBank/DDBJ databases">
        <title>Genome sequence of Bacillus cereus AH820.</title>
        <authorList>
            <person name="Dodson R.J."/>
            <person name="Durkin A.S."/>
            <person name="Rosovitz M.J."/>
            <person name="Rasko D.A."/>
            <person name="Hoffmaster A."/>
            <person name="Ravel J."/>
            <person name="Sutton G."/>
        </authorList>
    </citation>
    <scope>NUCLEOTIDE SEQUENCE [LARGE SCALE GENOMIC DNA]</scope>
    <source>
        <strain>AH820</strain>
    </source>
</reference>
<comment type="function">
    <text evidence="1">Nucleotidyltransferase involved in the post-translational modification of proteins. It can catalyze the addition of adenosine monophosphate (AMP) or uridine monophosphate (UMP) to a protein, resulting in modifications known as AMPylation and UMPylation.</text>
</comment>
<comment type="catalytic activity">
    <reaction evidence="1">
        <text>L-seryl-[protein] + ATP = 3-O-(5'-adenylyl)-L-seryl-[protein] + diphosphate</text>
        <dbReference type="Rhea" id="RHEA:58120"/>
        <dbReference type="Rhea" id="RHEA-COMP:9863"/>
        <dbReference type="Rhea" id="RHEA-COMP:15073"/>
        <dbReference type="ChEBI" id="CHEBI:29999"/>
        <dbReference type="ChEBI" id="CHEBI:30616"/>
        <dbReference type="ChEBI" id="CHEBI:33019"/>
        <dbReference type="ChEBI" id="CHEBI:142516"/>
        <dbReference type="EC" id="2.7.7.108"/>
    </reaction>
</comment>
<comment type="catalytic activity">
    <reaction evidence="1">
        <text>L-threonyl-[protein] + ATP = 3-O-(5'-adenylyl)-L-threonyl-[protein] + diphosphate</text>
        <dbReference type="Rhea" id="RHEA:54292"/>
        <dbReference type="Rhea" id="RHEA-COMP:11060"/>
        <dbReference type="Rhea" id="RHEA-COMP:13847"/>
        <dbReference type="ChEBI" id="CHEBI:30013"/>
        <dbReference type="ChEBI" id="CHEBI:30616"/>
        <dbReference type="ChEBI" id="CHEBI:33019"/>
        <dbReference type="ChEBI" id="CHEBI:138113"/>
        <dbReference type="EC" id="2.7.7.108"/>
    </reaction>
</comment>
<comment type="catalytic activity">
    <reaction evidence="1">
        <text>L-tyrosyl-[protein] + ATP = O-(5'-adenylyl)-L-tyrosyl-[protein] + diphosphate</text>
        <dbReference type="Rhea" id="RHEA:54288"/>
        <dbReference type="Rhea" id="RHEA-COMP:10136"/>
        <dbReference type="Rhea" id="RHEA-COMP:13846"/>
        <dbReference type="ChEBI" id="CHEBI:30616"/>
        <dbReference type="ChEBI" id="CHEBI:33019"/>
        <dbReference type="ChEBI" id="CHEBI:46858"/>
        <dbReference type="ChEBI" id="CHEBI:83624"/>
        <dbReference type="EC" id="2.7.7.108"/>
    </reaction>
</comment>
<comment type="catalytic activity">
    <reaction evidence="1">
        <text>L-histidyl-[protein] + UTP = N(tele)-(5'-uridylyl)-L-histidyl-[protein] + diphosphate</text>
        <dbReference type="Rhea" id="RHEA:83891"/>
        <dbReference type="Rhea" id="RHEA-COMP:9745"/>
        <dbReference type="Rhea" id="RHEA-COMP:20239"/>
        <dbReference type="ChEBI" id="CHEBI:29979"/>
        <dbReference type="ChEBI" id="CHEBI:33019"/>
        <dbReference type="ChEBI" id="CHEBI:46398"/>
        <dbReference type="ChEBI" id="CHEBI:233474"/>
    </reaction>
</comment>
<comment type="catalytic activity">
    <reaction evidence="1">
        <text>L-seryl-[protein] + UTP = O-(5'-uridylyl)-L-seryl-[protein] + diphosphate</text>
        <dbReference type="Rhea" id="RHEA:64604"/>
        <dbReference type="Rhea" id="RHEA-COMP:9863"/>
        <dbReference type="Rhea" id="RHEA-COMP:16635"/>
        <dbReference type="ChEBI" id="CHEBI:29999"/>
        <dbReference type="ChEBI" id="CHEBI:33019"/>
        <dbReference type="ChEBI" id="CHEBI:46398"/>
        <dbReference type="ChEBI" id="CHEBI:156051"/>
    </reaction>
</comment>
<comment type="catalytic activity">
    <reaction evidence="1">
        <text>L-tyrosyl-[protein] + UTP = O-(5'-uridylyl)-L-tyrosyl-[protein] + diphosphate</text>
        <dbReference type="Rhea" id="RHEA:83887"/>
        <dbReference type="Rhea" id="RHEA-COMP:10136"/>
        <dbReference type="Rhea" id="RHEA-COMP:20238"/>
        <dbReference type="ChEBI" id="CHEBI:33019"/>
        <dbReference type="ChEBI" id="CHEBI:46398"/>
        <dbReference type="ChEBI" id="CHEBI:46858"/>
        <dbReference type="ChEBI" id="CHEBI:90602"/>
    </reaction>
</comment>
<comment type="cofactor">
    <cofactor evidence="1">
        <name>Mg(2+)</name>
        <dbReference type="ChEBI" id="CHEBI:18420"/>
    </cofactor>
    <cofactor evidence="1">
        <name>Mn(2+)</name>
        <dbReference type="ChEBI" id="CHEBI:29035"/>
    </cofactor>
</comment>
<comment type="similarity">
    <text evidence="1">Belongs to the SELO family.</text>
</comment>
<feature type="chain" id="PRO_1000132086" description="Protein nucleotidyltransferase YdiU">
    <location>
        <begin position="1"/>
        <end position="488"/>
    </location>
</feature>
<feature type="region of interest" description="Disordered" evidence="2">
    <location>
        <begin position="108"/>
        <end position="127"/>
    </location>
</feature>
<feature type="active site" description="Proton acceptor" evidence="1">
    <location>
        <position position="253"/>
    </location>
</feature>
<feature type="binding site" evidence="1">
    <location>
        <position position="91"/>
    </location>
    <ligand>
        <name>ATP</name>
        <dbReference type="ChEBI" id="CHEBI:30616"/>
    </ligand>
</feature>
<feature type="binding site" evidence="1">
    <location>
        <position position="93"/>
    </location>
    <ligand>
        <name>ATP</name>
        <dbReference type="ChEBI" id="CHEBI:30616"/>
    </ligand>
</feature>
<feature type="binding site" evidence="1">
    <location>
        <position position="94"/>
    </location>
    <ligand>
        <name>ATP</name>
        <dbReference type="ChEBI" id="CHEBI:30616"/>
    </ligand>
</feature>
<feature type="binding site" evidence="1">
    <location>
        <position position="114"/>
    </location>
    <ligand>
        <name>ATP</name>
        <dbReference type="ChEBI" id="CHEBI:30616"/>
    </ligand>
</feature>
<feature type="binding site" evidence="1">
    <location>
        <position position="126"/>
    </location>
    <ligand>
        <name>ATP</name>
        <dbReference type="ChEBI" id="CHEBI:30616"/>
    </ligand>
</feature>
<feature type="binding site" evidence="1">
    <location>
        <position position="127"/>
    </location>
    <ligand>
        <name>ATP</name>
        <dbReference type="ChEBI" id="CHEBI:30616"/>
    </ligand>
</feature>
<feature type="binding site" evidence="1">
    <location>
        <position position="177"/>
    </location>
    <ligand>
        <name>ATP</name>
        <dbReference type="ChEBI" id="CHEBI:30616"/>
    </ligand>
</feature>
<feature type="binding site" evidence="1">
    <location>
        <position position="184"/>
    </location>
    <ligand>
        <name>ATP</name>
        <dbReference type="ChEBI" id="CHEBI:30616"/>
    </ligand>
</feature>
<feature type="binding site" evidence="1">
    <location>
        <position position="254"/>
    </location>
    <ligand>
        <name>Mg(2+)</name>
        <dbReference type="ChEBI" id="CHEBI:18420"/>
    </ligand>
</feature>
<feature type="binding site" evidence="1">
    <location>
        <position position="263"/>
    </location>
    <ligand>
        <name>ATP</name>
        <dbReference type="ChEBI" id="CHEBI:30616"/>
    </ligand>
</feature>
<feature type="binding site" evidence="1">
    <location>
        <position position="263"/>
    </location>
    <ligand>
        <name>Mg(2+)</name>
        <dbReference type="ChEBI" id="CHEBI:18420"/>
    </ligand>
</feature>
<protein>
    <recommendedName>
        <fullName evidence="1">Protein nucleotidyltransferase YdiU</fullName>
        <ecNumber evidence="1">2.7.7.-</ecNumber>
    </recommendedName>
    <alternativeName>
        <fullName evidence="1">Protein adenylyltransferase YdiU</fullName>
        <ecNumber evidence="1">2.7.7.108</ecNumber>
    </alternativeName>
    <alternativeName>
        <fullName evidence="1">Protein uridylyltransferase YdiU</fullName>
        <ecNumber evidence="1">2.7.7.-</ecNumber>
    </alternativeName>
</protein>
<accession>B7JH71</accession>
<sequence>MTKNNEAGWNLDHSYTTLPQSFYTEIPPTPVSSPELVKLNHSLAISLGFNPEELKKEAEIAIFAGNALPEGAHPLAQAYAGHQFGHFNMLGDGRALLIGEQMTPSGKRFDIQLKGSGPTPYSRRGDGRAALGPMLREYIISEAMYALDIPTTRSLAVVTTGEPTYRETKLPGAILTRVASSHIRVGTFQYAAARGSIEDLQSLADYTIKRHYPEIEAHENRYTALLQEVIKKQASLIAKWQLVGFIHGVMNTDNITISGETIDYGPCAFMDNYDQGTVFSSIDTQGRYAYGNQPYMAAWDLARLAESLIPILHEDEEEALKIAQDEISKFSVQYEKQWFLGMKKKLGLFSNEEQDQSLIEQLLKMMEKFKADYTNTFRSLTLNTIENTALFESPEFKEWYKLWQSRLEKQEESKENAYEMMKNNNPSIIPRNHRVEEALEAAVTNGDYSVMEKLLEALSNPYAYATEQEEYCVPPAPTNRPYRTFCGT</sequence>
<organism>
    <name type="scientific">Bacillus cereus (strain AH820)</name>
    <dbReference type="NCBI Taxonomy" id="405535"/>
    <lineage>
        <taxon>Bacteria</taxon>
        <taxon>Bacillati</taxon>
        <taxon>Bacillota</taxon>
        <taxon>Bacilli</taxon>
        <taxon>Bacillales</taxon>
        <taxon>Bacillaceae</taxon>
        <taxon>Bacillus</taxon>
        <taxon>Bacillus cereus group</taxon>
    </lineage>
</organism>
<proteinExistence type="inferred from homology"/>
<dbReference type="EC" id="2.7.7.-" evidence="1"/>
<dbReference type="EC" id="2.7.7.108" evidence="1"/>
<dbReference type="EMBL" id="CP001283">
    <property type="protein sequence ID" value="ACK87417.1"/>
    <property type="molecule type" value="Genomic_DNA"/>
</dbReference>
<dbReference type="RefSeq" id="WP_000164883.1">
    <property type="nucleotide sequence ID" value="NC_011773.1"/>
</dbReference>
<dbReference type="SMR" id="B7JH71"/>
<dbReference type="KEGG" id="bcu:BCAH820_3523"/>
<dbReference type="HOGENOM" id="CLU_010245_4_1_9"/>
<dbReference type="Proteomes" id="UP000001363">
    <property type="component" value="Chromosome"/>
</dbReference>
<dbReference type="GO" id="GO:0070733">
    <property type="term" value="F:AMPylase activity"/>
    <property type="evidence" value="ECO:0007669"/>
    <property type="project" value="TreeGrafter"/>
</dbReference>
<dbReference type="GO" id="GO:0005524">
    <property type="term" value="F:ATP binding"/>
    <property type="evidence" value="ECO:0007669"/>
    <property type="project" value="UniProtKB-UniRule"/>
</dbReference>
<dbReference type="GO" id="GO:0000287">
    <property type="term" value="F:magnesium ion binding"/>
    <property type="evidence" value="ECO:0007669"/>
    <property type="project" value="UniProtKB-UniRule"/>
</dbReference>
<dbReference type="HAMAP" id="MF_00692">
    <property type="entry name" value="YdiU_SelO"/>
    <property type="match status" value="1"/>
</dbReference>
<dbReference type="InterPro" id="IPR003846">
    <property type="entry name" value="SelO"/>
</dbReference>
<dbReference type="NCBIfam" id="NF000658">
    <property type="entry name" value="PRK00029.1"/>
    <property type="match status" value="1"/>
</dbReference>
<dbReference type="PANTHER" id="PTHR32057">
    <property type="entry name" value="PROTEIN ADENYLYLTRANSFERASE SELO, MITOCHONDRIAL"/>
    <property type="match status" value="1"/>
</dbReference>
<dbReference type="PANTHER" id="PTHR32057:SF14">
    <property type="entry name" value="PROTEIN ADENYLYLTRANSFERASE SELO, MITOCHONDRIAL"/>
    <property type="match status" value="1"/>
</dbReference>
<dbReference type="Pfam" id="PF02696">
    <property type="entry name" value="SelO"/>
    <property type="match status" value="1"/>
</dbReference>
<name>SELO_BACC0</name>
<keyword id="KW-0067">ATP-binding</keyword>
<keyword id="KW-0460">Magnesium</keyword>
<keyword id="KW-0464">Manganese</keyword>
<keyword id="KW-0479">Metal-binding</keyword>
<keyword id="KW-0547">Nucleotide-binding</keyword>
<keyword id="KW-0548">Nucleotidyltransferase</keyword>
<keyword id="KW-0808">Transferase</keyword>